<dbReference type="EC" id="2.8.1.13" evidence="1"/>
<dbReference type="EMBL" id="CP000252">
    <property type="protein sequence ID" value="ABC78366.1"/>
    <property type="molecule type" value="Genomic_DNA"/>
</dbReference>
<dbReference type="SMR" id="Q2LWA6"/>
<dbReference type="FunCoup" id="Q2LWA6">
    <property type="interactions" value="498"/>
</dbReference>
<dbReference type="STRING" id="56780.SYN_01256"/>
<dbReference type="KEGG" id="sat:SYN_01256"/>
<dbReference type="eggNOG" id="COG0482">
    <property type="taxonomic scope" value="Bacteria"/>
</dbReference>
<dbReference type="HOGENOM" id="CLU_035188_0_0_7"/>
<dbReference type="InParanoid" id="Q2LWA6"/>
<dbReference type="OrthoDB" id="9800696at2"/>
<dbReference type="Proteomes" id="UP000001933">
    <property type="component" value="Chromosome"/>
</dbReference>
<dbReference type="GO" id="GO:0005737">
    <property type="term" value="C:cytoplasm"/>
    <property type="evidence" value="ECO:0007669"/>
    <property type="project" value="UniProtKB-SubCell"/>
</dbReference>
<dbReference type="GO" id="GO:0005524">
    <property type="term" value="F:ATP binding"/>
    <property type="evidence" value="ECO:0007669"/>
    <property type="project" value="UniProtKB-KW"/>
</dbReference>
<dbReference type="GO" id="GO:0000049">
    <property type="term" value="F:tRNA binding"/>
    <property type="evidence" value="ECO:0007669"/>
    <property type="project" value="UniProtKB-KW"/>
</dbReference>
<dbReference type="GO" id="GO:0103016">
    <property type="term" value="F:tRNA-uridine 2-sulfurtransferase activity"/>
    <property type="evidence" value="ECO:0007669"/>
    <property type="project" value="UniProtKB-EC"/>
</dbReference>
<dbReference type="GO" id="GO:0002143">
    <property type="term" value="P:tRNA wobble position uridine thiolation"/>
    <property type="evidence" value="ECO:0007669"/>
    <property type="project" value="TreeGrafter"/>
</dbReference>
<dbReference type="CDD" id="cd01998">
    <property type="entry name" value="MnmA_TRMU-like"/>
    <property type="match status" value="1"/>
</dbReference>
<dbReference type="FunFam" id="2.30.30.280:FF:000001">
    <property type="entry name" value="tRNA-specific 2-thiouridylase MnmA"/>
    <property type="match status" value="1"/>
</dbReference>
<dbReference type="FunFam" id="3.40.50.620:FF:000115">
    <property type="entry name" value="tRNA-specific 2-thiouridylase MnmA"/>
    <property type="match status" value="1"/>
</dbReference>
<dbReference type="Gene3D" id="2.30.30.280">
    <property type="entry name" value="Adenine nucleotide alpha hydrolases-like domains"/>
    <property type="match status" value="1"/>
</dbReference>
<dbReference type="Gene3D" id="3.40.50.620">
    <property type="entry name" value="HUPs"/>
    <property type="match status" value="1"/>
</dbReference>
<dbReference type="Gene3D" id="2.40.30.10">
    <property type="entry name" value="Translation factors"/>
    <property type="match status" value="1"/>
</dbReference>
<dbReference type="HAMAP" id="MF_00144">
    <property type="entry name" value="tRNA_thiouridyl_MnmA"/>
    <property type="match status" value="1"/>
</dbReference>
<dbReference type="InterPro" id="IPR004506">
    <property type="entry name" value="MnmA-like"/>
</dbReference>
<dbReference type="InterPro" id="IPR046885">
    <property type="entry name" value="MnmA-like_C"/>
</dbReference>
<dbReference type="InterPro" id="IPR046884">
    <property type="entry name" value="MnmA-like_central"/>
</dbReference>
<dbReference type="InterPro" id="IPR023382">
    <property type="entry name" value="MnmA-like_central_sf"/>
</dbReference>
<dbReference type="InterPro" id="IPR014729">
    <property type="entry name" value="Rossmann-like_a/b/a_fold"/>
</dbReference>
<dbReference type="NCBIfam" id="NF001138">
    <property type="entry name" value="PRK00143.1"/>
    <property type="match status" value="1"/>
</dbReference>
<dbReference type="NCBIfam" id="TIGR00420">
    <property type="entry name" value="trmU"/>
    <property type="match status" value="1"/>
</dbReference>
<dbReference type="PANTHER" id="PTHR11933:SF5">
    <property type="entry name" value="MITOCHONDRIAL TRNA-SPECIFIC 2-THIOURIDYLASE 1"/>
    <property type="match status" value="1"/>
</dbReference>
<dbReference type="PANTHER" id="PTHR11933">
    <property type="entry name" value="TRNA 5-METHYLAMINOMETHYL-2-THIOURIDYLATE -METHYLTRANSFERASE"/>
    <property type="match status" value="1"/>
</dbReference>
<dbReference type="Pfam" id="PF03054">
    <property type="entry name" value="tRNA_Me_trans"/>
    <property type="match status" value="1"/>
</dbReference>
<dbReference type="Pfam" id="PF20258">
    <property type="entry name" value="tRNA_Me_trans_C"/>
    <property type="match status" value="1"/>
</dbReference>
<dbReference type="Pfam" id="PF20259">
    <property type="entry name" value="tRNA_Me_trans_M"/>
    <property type="match status" value="1"/>
</dbReference>
<dbReference type="SUPFAM" id="SSF52402">
    <property type="entry name" value="Adenine nucleotide alpha hydrolases-like"/>
    <property type="match status" value="1"/>
</dbReference>
<gene>
    <name evidence="1" type="primary">mnmA1</name>
    <name type="ordered locus">SYNAS_24870</name>
    <name type="ORF">SYN_01256</name>
</gene>
<evidence type="ECO:0000255" key="1">
    <source>
        <dbReference type="HAMAP-Rule" id="MF_00144"/>
    </source>
</evidence>
<keyword id="KW-0067">ATP-binding</keyword>
<keyword id="KW-0963">Cytoplasm</keyword>
<keyword id="KW-1015">Disulfide bond</keyword>
<keyword id="KW-0547">Nucleotide-binding</keyword>
<keyword id="KW-1185">Reference proteome</keyword>
<keyword id="KW-0694">RNA-binding</keyword>
<keyword id="KW-0808">Transferase</keyword>
<keyword id="KW-0819">tRNA processing</keyword>
<keyword id="KW-0820">tRNA-binding</keyword>
<accession>Q2LWA6</accession>
<name>MNMA1_SYNAS</name>
<sequence length="372" mass="41427">MISVMAPGSEKTGKVETILKKRVLLAISGGVDSSVAALLLKEEGYEVAGVTMCLGVREEENKVRCCGREAIEDARGVCEILGIPHYVLDYAPLLETCVIDKFVREYRLGRTPNPCIDCNRYLKFGHLLDSARTMGFDYLATGHYAKIERKESRWILKKAKDLVKDQTYFLYPIPVAALEHILFPLADRTKDEVREIARQALLPIAEKPESQDLCFVTQDSYRDFLQEQGCPVHPGPIVDRSGRVLGEHSGTVFYTIGQRHGLGISSPFPLYVVAIDVAGNSVIVSGKEDVYAQGLVAGEMNWLTPERPQEAEARIRHRKRTCSCRIVPEGDRIRVYFAEDQDAVTPGQAVVLYQEDEVLGGGVIEEALHYAN</sequence>
<organism>
    <name type="scientific">Syntrophus aciditrophicus (strain SB)</name>
    <dbReference type="NCBI Taxonomy" id="56780"/>
    <lineage>
        <taxon>Bacteria</taxon>
        <taxon>Pseudomonadati</taxon>
        <taxon>Thermodesulfobacteriota</taxon>
        <taxon>Syntrophia</taxon>
        <taxon>Syntrophales</taxon>
        <taxon>Syntrophaceae</taxon>
        <taxon>Syntrophus</taxon>
    </lineage>
</organism>
<feature type="chain" id="PRO_0000349836" description="tRNA-specific 2-thiouridylase MnmA 1">
    <location>
        <begin position="1"/>
        <end position="372"/>
    </location>
</feature>
<feature type="region of interest" description="Interaction with tRNA" evidence="1">
    <location>
        <begin position="164"/>
        <end position="166"/>
    </location>
</feature>
<feature type="active site" description="Nucleophile" evidence="1">
    <location>
        <position position="118"/>
    </location>
</feature>
<feature type="active site" description="Cysteine persulfide intermediate" evidence="1">
    <location>
        <position position="214"/>
    </location>
</feature>
<feature type="binding site" evidence="1">
    <location>
        <begin position="26"/>
        <end position="33"/>
    </location>
    <ligand>
        <name>ATP</name>
        <dbReference type="ChEBI" id="CHEBI:30616"/>
    </ligand>
</feature>
<feature type="binding site" evidence="1">
    <location>
        <position position="52"/>
    </location>
    <ligand>
        <name>ATP</name>
        <dbReference type="ChEBI" id="CHEBI:30616"/>
    </ligand>
</feature>
<feature type="binding site" evidence="1">
    <location>
        <position position="142"/>
    </location>
    <ligand>
        <name>ATP</name>
        <dbReference type="ChEBI" id="CHEBI:30616"/>
    </ligand>
</feature>
<feature type="site" description="Interaction with tRNA" evidence="1">
    <location>
        <position position="143"/>
    </location>
</feature>
<feature type="site" description="Interaction with tRNA" evidence="1">
    <location>
        <position position="348"/>
    </location>
</feature>
<feature type="disulfide bond" description="Alternate" evidence="1">
    <location>
        <begin position="118"/>
        <end position="214"/>
    </location>
</feature>
<proteinExistence type="inferred from homology"/>
<protein>
    <recommendedName>
        <fullName evidence="1">tRNA-specific 2-thiouridylase MnmA 1</fullName>
        <ecNumber evidence="1">2.8.1.13</ecNumber>
    </recommendedName>
</protein>
<reference key="1">
    <citation type="journal article" date="2007" name="Proc. Natl. Acad. Sci. U.S.A.">
        <title>The genome of Syntrophus aciditrophicus: life at the thermodynamic limit of microbial growth.</title>
        <authorList>
            <person name="McInerney M.J."/>
            <person name="Rohlin L."/>
            <person name="Mouttaki H."/>
            <person name="Kim U."/>
            <person name="Krupp R.S."/>
            <person name="Rios-Hernandez L."/>
            <person name="Sieber J."/>
            <person name="Struchtemeyer C.G."/>
            <person name="Bhattacharyya A."/>
            <person name="Campbell J.W."/>
            <person name="Gunsalus R.P."/>
        </authorList>
    </citation>
    <scope>NUCLEOTIDE SEQUENCE [LARGE SCALE GENOMIC DNA]</scope>
    <source>
        <strain>SB</strain>
    </source>
</reference>
<comment type="function">
    <text evidence="1">Catalyzes the 2-thiolation of uridine at the wobble position (U34) of tRNA, leading to the formation of s(2)U34.</text>
</comment>
<comment type="catalytic activity">
    <reaction evidence="1">
        <text>S-sulfanyl-L-cysteinyl-[protein] + uridine(34) in tRNA + AH2 + ATP = 2-thiouridine(34) in tRNA + L-cysteinyl-[protein] + A + AMP + diphosphate + H(+)</text>
        <dbReference type="Rhea" id="RHEA:47032"/>
        <dbReference type="Rhea" id="RHEA-COMP:10131"/>
        <dbReference type="Rhea" id="RHEA-COMP:11726"/>
        <dbReference type="Rhea" id="RHEA-COMP:11727"/>
        <dbReference type="Rhea" id="RHEA-COMP:11728"/>
        <dbReference type="ChEBI" id="CHEBI:13193"/>
        <dbReference type="ChEBI" id="CHEBI:15378"/>
        <dbReference type="ChEBI" id="CHEBI:17499"/>
        <dbReference type="ChEBI" id="CHEBI:29950"/>
        <dbReference type="ChEBI" id="CHEBI:30616"/>
        <dbReference type="ChEBI" id="CHEBI:33019"/>
        <dbReference type="ChEBI" id="CHEBI:61963"/>
        <dbReference type="ChEBI" id="CHEBI:65315"/>
        <dbReference type="ChEBI" id="CHEBI:87170"/>
        <dbReference type="ChEBI" id="CHEBI:456215"/>
        <dbReference type="EC" id="2.8.1.13"/>
    </reaction>
</comment>
<comment type="subcellular location">
    <subcellularLocation>
        <location evidence="1">Cytoplasm</location>
    </subcellularLocation>
</comment>
<comment type="similarity">
    <text evidence="1">Belongs to the MnmA/TRMU family.</text>
</comment>